<protein>
    <recommendedName>
        <fullName>Probable Xaa-Pro aminopeptidase pepP</fullName>
        <ecNumber>3.4.11.9</ecNumber>
    </recommendedName>
    <alternativeName>
        <fullName>Aminoacylproline aminopeptidase</fullName>
    </alternativeName>
    <alternativeName>
        <fullName>Prolidase</fullName>
    </alternativeName>
</protein>
<organism>
    <name type="scientific">Aspergillus fumigatus (strain CBS 144.89 / FGSC A1163 / CEA10)</name>
    <name type="common">Neosartorya fumigata</name>
    <dbReference type="NCBI Taxonomy" id="451804"/>
    <lineage>
        <taxon>Eukaryota</taxon>
        <taxon>Fungi</taxon>
        <taxon>Dikarya</taxon>
        <taxon>Ascomycota</taxon>
        <taxon>Pezizomycotina</taxon>
        <taxon>Eurotiomycetes</taxon>
        <taxon>Eurotiomycetidae</taxon>
        <taxon>Eurotiales</taxon>
        <taxon>Aspergillaceae</taxon>
        <taxon>Aspergillus</taxon>
        <taxon>Aspergillus subgen. Fumigati</taxon>
    </lineage>
</organism>
<keyword id="KW-0031">Aminopeptidase</keyword>
<keyword id="KW-0378">Hydrolase</keyword>
<keyword id="KW-0464">Manganese</keyword>
<keyword id="KW-0479">Metal-binding</keyword>
<keyword id="KW-0482">Metalloprotease</keyword>
<keyword id="KW-0645">Protease</keyword>
<evidence type="ECO:0000250" key="1"/>
<evidence type="ECO:0000305" key="2"/>
<gene>
    <name type="primary">pepP</name>
    <name type="ORF">AFUB_023550</name>
</gene>
<proteinExistence type="inferred from homology"/>
<feature type="chain" id="PRO_0000411863" description="Probable Xaa-Pro aminopeptidase pepP">
    <location>
        <begin position="1"/>
        <end position="468"/>
    </location>
</feature>
<feature type="binding site" evidence="1">
    <location>
        <position position="265"/>
    </location>
    <ligand>
        <name>Mn(2+)</name>
        <dbReference type="ChEBI" id="CHEBI:29035"/>
        <label>2</label>
    </ligand>
</feature>
<feature type="binding site" evidence="1">
    <location>
        <position position="276"/>
    </location>
    <ligand>
        <name>Mn(2+)</name>
        <dbReference type="ChEBI" id="CHEBI:29035"/>
        <label>1</label>
    </ligand>
</feature>
<feature type="binding site" evidence="1">
    <location>
        <position position="276"/>
    </location>
    <ligand>
        <name>Mn(2+)</name>
        <dbReference type="ChEBI" id="CHEBI:29035"/>
        <label>2</label>
    </ligand>
</feature>
<feature type="binding site" evidence="1">
    <location>
        <position position="399"/>
    </location>
    <ligand>
        <name>Mn(2+)</name>
        <dbReference type="ChEBI" id="CHEBI:29035"/>
        <label>1</label>
    </ligand>
</feature>
<feature type="binding site" evidence="1">
    <location>
        <position position="439"/>
    </location>
    <ligand>
        <name>Mn(2+)</name>
        <dbReference type="ChEBI" id="CHEBI:29035"/>
        <label>1</label>
    </ligand>
</feature>
<feature type="binding site" evidence="1">
    <location>
        <position position="439"/>
    </location>
    <ligand>
        <name>Mn(2+)</name>
        <dbReference type="ChEBI" id="CHEBI:29035"/>
        <label>2</label>
    </ligand>
</feature>
<sequence length="468" mass="51944">MMAAVDAILAGKYPAKAHARRVAESLQSYRNGCPGIVYLEAQKTRLIEDNDEPAPFRQRRPFFYLSGCPLPDSCLVYDLSEDQLTLFIPPVDPEDVIWSGLPMSTEEAQNQYDVDRVLVTTELNSTLASIVSSHGGKAIAFTIADQVSESTQFHGFSEVNHSVLKGVIEQSRVVKDEYEVALLRKANDISAKAHIAAIKASQTAVNEREIEGAFIATCIANGAREQSYHPIVACGENGATLHYGKNDDTLIDPVTNQKKRNVLIDAGGEYRTYCADITRVIPVGGKFTAETRQIYDIVLQMQTECIAMLKEGVQWEDVHAHAHRVAIRGLLKLGILRGAEDEIFEKRVSVAFFPHGLGHYLGMDTHDTGGNPNYADKDTMFRYLRVRGRLPAGSVITVEPGVYFCRFIIEPYIKSPESNKYIDTNVLDRYWRVGGVRIEDNVLVTKDGYDNLTTAPKAVDELERLAAS</sequence>
<reference key="1">
    <citation type="journal article" date="2008" name="PLoS Genet.">
        <title>Genomic islands in the pathogenic filamentous fungus Aspergillus fumigatus.</title>
        <authorList>
            <person name="Fedorova N.D."/>
            <person name="Khaldi N."/>
            <person name="Joardar V.S."/>
            <person name="Maiti R."/>
            <person name="Amedeo P."/>
            <person name="Anderson M.J."/>
            <person name="Crabtree J."/>
            <person name="Silva J.C."/>
            <person name="Badger J.H."/>
            <person name="Albarraq A."/>
            <person name="Angiuoli S."/>
            <person name="Bussey H."/>
            <person name="Bowyer P."/>
            <person name="Cotty P.J."/>
            <person name="Dyer P.S."/>
            <person name="Egan A."/>
            <person name="Galens K."/>
            <person name="Fraser-Liggett C.M."/>
            <person name="Haas B.J."/>
            <person name="Inman J.M."/>
            <person name="Kent R."/>
            <person name="Lemieux S."/>
            <person name="Malavazi I."/>
            <person name="Orvis J."/>
            <person name="Roemer T."/>
            <person name="Ronning C.M."/>
            <person name="Sundaram J.P."/>
            <person name="Sutton G."/>
            <person name="Turner G."/>
            <person name="Venter J.C."/>
            <person name="White O.R."/>
            <person name="Whitty B.R."/>
            <person name="Youngman P."/>
            <person name="Wolfe K.H."/>
            <person name="Goldman G.H."/>
            <person name="Wortman J.R."/>
            <person name="Jiang B."/>
            <person name="Denning D.W."/>
            <person name="Nierman W.C."/>
        </authorList>
    </citation>
    <scope>NUCLEOTIDE SEQUENCE [LARGE SCALE GENOMIC DNA]</scope>
    <source>
        <strain>CBS 144.89 / FGSC A1163 / CEA10</strain>
    </source>
</reference>
<accession>B0XW47</accession>
<comment type="function">
    <text evidence="1">Catalyzes the removal of a penultimate prolyl residue from the N-termini of peptides.</text>
</comment>
<comment type="catalytic activity">
    <reaction>
        <text>Release of any N-terminal amino acid, including proline, that is linked to proline, even from a dipeptide or tripeptide.</text>
        <dbReference type="EC" id="3.4.11.9"/>
    </reaction>
</comment>
<comment type="cofactor">
    <cofactor evidence="1">
        <name>Mn(2+)</name>
        <dbReference type="ChEBI" id="CHEBI:29035"/>
    </cofactor>
    <text evidence="1">Binds 2 manganese ions per subunit.</text>
</comment>
<comment type="similarity">
    <text evidence="2">Belongs to the peptidase M24B family.</text>
</comment>
<dbReference type="EC" id="3.4.11.9"/>
<dbReference type="EMBL" id="DS499595">
    <property type="protein sequence ID" value="EDP54299.1"/>
    <property type="molecule type" value="Genomic_DNA"/>
</dbReference>
<dbReference type="SMR" id="B0XW47"/>
<dbReference type="EnsemblFungi" id="EDP54299">
    <property type="protein sequence ID" value="EDP54299"/>
    <property type="gene ID" value="AFUB_023550"/>
</dbReference>
<dbReference type="VEuPathDB" id="FungiDB:AFUB_023550"/>
<dbReference type="HOGENOM" id="CLU_017266_1_2_1"/>
<dbReference type="OrthoDB" id="28967at5052"/>
<dbReference type="PhylomeDB" id="B0XW47"/>
<dbReference type="Proteomes" id="UP000001699">
    <property type="component" value="Unassembled WGS sequence"/>
</dbReference>
<dbReference type="GO" id="GO:0030145">
    <property type="term" value="F:manganese ion binding"/>
    <property type="evidence" value="ECO:0007669"/>
    <property type="project" value="InterPro"/>
</dbReference>
<dbReference type="GO" id="GO:0070006">
    <property type="term" value="F:metalloaminopeptidase activity"/>
    <property type="evidence" value="ECO:0007669"/>
    <property type="project" value="InterPro"/>
</dbReference>
<dbReference type="GO" id="GO:0006508">
    <property type="term" value="P:proteolysis"/>
    <property type="evidence" value="ECO:0007669"/>
    <property type="project" value="UniProtKB-KW"/>
</dbReference>
<dbReference type="CDD" id="cd01087">
    <property type="entry name" value="Prolidase"/>
    <property type="match status" value="1"/>
</dbReference>
<dbReference type="FunFam" id="3.90.230.10:FF:000002">
    <property type="entry name" value="Xaa-Pro aminopeptidase 3"/>
    <property type="match status" value="1"/>
</dbReference>
<dbReference type="Gene3D" id="3.90.230.10">
    <property type="entry name" value="Creatinase/methionine aminopeptidase superfamily"/>
    <property type="match status" value="1"/>
</dbReference>
<dbReference type="Gene3D" id="3.40.350.10">
    <property type="entry name" value="Creatinase/prolidase N-terminal domain"/>
    <property type="match status" value="1"/>
</dbReference>
<dbReference type="InterPro" id="IPR007865">
    <property type="entry name" value="Aminopep_P_N"/>
</dbReference>
<dbReference type="InterPro" id="IPR029149">
    <property type="entry name" value="Creatin/AminoP/Spt16_N"/>
</dbReference>
<dbReference type="InterPro" id="IPR036005">
    <property type="entry name" value="Creatinase/aminopeptidase-like"/>
</dbReference>
<dbReference type="InterPro" id="IPR000994">
    <property type="entry name" value="Pept_M24"/>
</dbReference>
<dbReference type="InterPro" id="IPR052433">
    <property type="entry name" value="X-Pro_dipept-like"/>
</dbReference>
<dbReference type="PANTHER" id="PTHR43226">
    <property type="entry name" value="XAA-PRO AMINOPEPTIDASE 3"/>
    <property type="match status" value="1"/>
</dbReference>
<dbReference type="PANTHER" id="PTHR43226:SF1">
    <property type="entry name" value="XAA-PRO DIPEPTIDASE"/>
    <property type="match status" value="1"/>
</dbReference>
<dbReference type="Pfam" id="PF05195">
    <property type="entry name" value="AMP_N"/>
    <property type="match status" value="1"/>
</dbReference>
<dbReference type="Pfam" id="PF00557">
    <property type="entry name" value="Peptidase_M24"/>
    <property type="match status" value="1"/>
</dbReference>
<dbReference type="SMART" id="SM01011">
    <property type="entry name" value="AMP_N"/>
    <property type="match status" value="1"/>
</dbReference>
<dbReference type="SUPFAM" id="SSF55920">
    <property type="entry name" value="Creatinase/aminopeptidase"/>
    <property type="match status" value="1"/>
</dbReference>
<dbReference type="SUPFAM" id="SSF53092">
    <property type="entry name" value="Creatinase/prolidase N-terminal domain"/>
    <property type="match status" value="1"/>
</dbReference>
<name>AMPP3_ASPFC</name>